<evidence type="ECO:0000250" key="1"/>
<evidence type="ECO:0000255" key="2"/>
<evidence type="ECO:0000305" key="3"/>
<sequence>MKFLALALTILLAAATQAVPMQADAPSQLEHVKVAMMEYMAQVKETGQRSIDLLDDTEFKEYKVQLSQSLDNLQQYAQTTSQSLAPYSEAFGAQLTDAAAAVRAEVMKDVEDVRTQLEPKRAELKEVLDKHIDEYRKKLEPLIKEIVEQRRTELEAFRVKMEPVVEEMRAKVSTNVEETKAKLMPIVETVRAKLTERLEELRTLAAPYAEEYKEQMFKAVGEVREKVGPLTNDFKGQVGPAAEQAKEKLMDFYETISQAMKA</sequence>
<gene>
    <name type="primary">apoa1</name>
    <name type="synonym">apoai</name>
</gene>
<reference key="1">
    <citation type="thesis" date="1995" institute="University of Illinois" country="United States">
        <authorList>
            <person name="Drover V.A.B."/>
        </authorList>
    </citation>
    <scope>NUCLEOTIDE SEQUENCE [MRNA]</scope>
    <source>
        <tissue>Liver</tissue>
    </source>
</reference>
<accession>Q91488</accession>
<keyword id="KW-0153">Cholesterol metabolism</keyword>
<keyword id="KW-0345">HDL</keyword>
<keyword id="KW-0443">Lipid metabolism</keyword>
<keyword id="KW-0445">Lipid transport</keyword>
<keyword id="KW-1185">Reference proteome</keyword>
<keyword id="KW-0677">Repeat</keyword>
<keyword id="KW-0964">Secreted</keyword>
<keyword id="KW-0732">Signal</keyword>
<keyword id="KW-0753">Steroid metabolism</keyword>
<keyword id="KW-1207">Sterol metabolism</keyword>
<keyword id="KW-0813">Transport</keyword>
<organism>
    <name type="scientific">Salmo trutta</name>
    <name type="common">Brown trout</name>
    <dbReference type="NCBI Taxonomy" id="8032"/>
    <lineage>
        <taxon>Eukaryota</taxon>
        <taxon>Metazoa</taxon>
        <taxon>Chordata</taxon>
        <taxon>Craniata</taxon>
        <taxon>Vertebrata</taxon>
        <taxon>Euteleostomi</taxon>
        <taxon>Actinopterygii</taxon>
        <taxon>Neopterygii</taxon>
        <taxon>Teleostei</taxon>
        <taxon>Protacanthopterygii</taxon>
        <taxon>Salmoniformes</taxon>
        <taxon>Salmonidae</taxon>
        <taxon>Salmoninae</taxon>
        <taxon>Salmo</taxon>
    </lineage>
</organism>
<proteinExistence type="evidence at transcript level"/>
<name>APOA1_SALTR</name>
<feature type="signal peptide" evidence="2">
    <location>
        <begin position="1"/>
        <end position="18"/>
    </location>
</feature>
<feature type="chain" id="PRO_0000425347" description="Proapolipoprotein A-I">
    <location>
        <begin position="19"/>
        <end position="262"/>
    </location>
</feature>
<feature type="chain" id="PRO_0000001972" description="Apolipoprotein A-I">
    <location>
        <begin position="24"/>
        <end position="262"/>
    </location>
</feature>
<feature type="repeat" description="1">
    <location>
        <begin position="64"/>
        <end position="85"/>
    </location>
</feature>
<feature type="repeat" description="2">
    <location>
        <begin position="87"/>
        <end position="107"/>
    </location>
</feature>
<feature type="repeat" description="3; half-length">
    <location>
        <begin position="108"/>
        <end position="118"/>
    </location>
</feature>
<feature type="repeat" description="4">
    <location>
        <begin position="119"/>
        <end position="140"/>
    </location>
</feature>
<feature type="repeat" description="5">
    <location>
        <begin position="141"/>
        <end position="162"/>
    </location>
</feature>
<feature type="repeat" description="6">
    <location>
        <begin position="163"/>
        <end position="184"/>
    </location>
</feature>
<feature type="repeat" description="7">
    <location>
        <begin position="185"/>
        <end position="206"/>
    </location>
</feature>
<feature type="repeat" description="8">
    <location>
        <begin position="207"/>
        <end position="228"/>
    </location>
</feature>
<feature type="repeat" description="9; half-length">
    <location>
        <begin position="229"/>
        <end position="239"/>
    </location>
</feature>
<feature type="repeat" description="10">
    <location>
        <begin position="240"/>
        <end position="262"/>
    </location>
</feature>
<feature type="region of interest" description="3 X approximate tandem repeats">
    <location>
        <begin position="32"/>
        <end position="63"/>
    </location>
</feature>
<feature type="region of interest" description="10 X approximate tandem repeats">
    <location>
        <begin position="64"/>
        <end position="262"/>
    </location>
</feature>
<protein>
    <recommendedName>
        <fullName>Apolipoprotein A-I</fullName>
        <shortName>Apo-AI</shortName>
        <shortName>ApoA-I</shortName>
    </recommendedName>
    <alternativeName>
        <fullName>Apolipoprotein A1</fullName>
    </alternativeName>
    <component>
        <recommendedName>
            <fullName>Proapolipoprotein A-I</fullName>
            <shortName>ProapoA-I</shortName>
        </recommendedName>
    </component>
</protein>
<comment type="function">
    <text evidence="1">Participates in the reverse transport of cholesterol from tissues to the liver for excretion by promoting cholesterol efflux from tissues and by acting as a cofactor for the lecithin cholesterol acyltransferase (LCAT).</text>
</comment>
<comment type="subcellular location">
    <subcellularLocation>
        <location evidence="1">Secreted</location>
    </subcellularLocation>
</comment>
<comment type="similarity">
    <text evidence="3">Belongs to the apolipoprotein A1/A4/E family.</text>
</comment>
<dbReference type="EMBL" id="L49383">
    <property type="protein sequence ID" value="AAA88542.1"/>
    <property type="molecule type" value="mRNA"/>
</dbReference>
<dbReference type="SMR" id="Q91488"/>
<dbReference type="InParanoid" id="Q91488"/>
<dbReference type="Proteomes" id="UP000472277">
    <property type="component" value="Unplaced"/>
</dbReference>
<dbReference type="GO" id="GO:0042627">
    <property type="term" value="C:chylomicron"/>
    <property type="evidence" value="ECO:0007669"/>
    <property type="project" value="TreeGrafter"/>
</dbReference>
<dbReference type="GO" id="GO:1903561">
    <property type="term" value="C:extracellular vesicle"/>
    <property type="evidence" value="ECO:0007669"/>
    <property type="project" value="TreeGrafter"/>
</dbReference>
<dbReference type="GO" id="GO:0034364">
    <property type="term" value="C:high-density lipoprotein particle"/>
    <property type="evidence" value="ECO:0007669"/>
    <property type="project" value="UniProtKB-KW"/>
</dbReference>
<dbReference type="GO" id="GO:0034362">
    <property type="term" value="C:low-density lipoprotein particle"/>
    <property type="evidence" value="ECO:0007669"/>
    <property type="project" value="TreeGrafter"/>
</dbReference>
<dbReference type="GO" id="GO:0034361">
    <property type="term" value="C:very-low-density lipoprotein particle"/>
    <property type="evidence" value="ECO:0007669"/>
    <property type="project" value="TreeGrafter"/>
</dbReference>
<dbReference type="GO" id="GO:0120020">
    <property type="term" value="F:cholesterol transfer activity"/>
    <property type="evidence" value="ECO:0007669"/>
    <property type="project" value="TreeGrafter"/>
</dbReference>
<dbReference type="GO" id="GO:0060228">
    <property type="term" value="F:phosphatidylcholine-sterol O-acyltransferase activator activity"/>
    <property type="evidence" value="ECO:0007669"/>
    <property type="project" value="TreeGrafter"/>
</dbReference>
<dbReference type="GO" id="GO:0005543">
    <property type="term" value="F:phospholipid binding"/>
    <property type="evidence" value="ECO:0007669"/>
    <property type="project" value="TreeGrafter"/>
</dbReference>
<dbReference type="GO" id="GO:0055090">
    <property type="term" value="P:acylglycerol homeostasis"/>
    <property type="evidence" value="ECO:0007669"/>
    <property type="project" value="TreeGrafter"/>
</dbReference>
<dbReference type="GO" id="GO:0033344">
    <property type="term" value="P:cholesterol efflux"/>
    <property type="evidence" value="ECO:0007669"/>
    <property type="project" value="TreeGrafter"/>
</dbReference>
<dbReference type="GO" id="GO:0008203">
    <property type="term" value="P:cholesterol metabolic process"/>
    <property type="evidence" value="ECO:0007669"/>
    <property type="project" value="UniProtKB-KW"/>
</dbReference>
<dbReference type="GO" id="GO:0042157">
    <property type="term" value="P:lipoprotein metabolic process"/>
    <property type="evidence" value="ECO:0007669"/>
    <property type="project" value="InterPro"/>
</dbReference>
<dbReference type="GO" id="GO:0033700">
    <property type="term" value="P:phospholipid efflux"/>
    <property type="evidence" value="ECO:0007669"/>
    <property type="project" value="TreeGrafter"/>
</dbReference>
<dbReference type="FunFam" id="1.20.120.20:FF:000007">
    <property type="entry name" value="Apolipoprotein A-IV a"/>
    <property type="match status" value="1"/>
</dbReference>
<dbReference type="Gene3D" id="1.20.5.20">
    <property type="match status" value="1"/>
</dbReference>
<dbReference type="Gene3D" id="1.20.120.20">
    <property type="entry name" value="Apolipoprotein"/>
    <property type="match status" value="2"/>
</dbReference>
<dbReference type="InterPro" id="IPR000074">
    <property type="entry name" value="ApoA_E"/>
</dbReference>
<dbReference type="InterPro" id="IPR050163">
    <property type="entry name" value="Apolipoprotein_A1/A4/E"/>
</dbReference>
<dbReference type="PANTHER" id="PTHR18976">
    <property type="entry name" value="APOLIPOPROTEIN"/>
    <property type="match status" value="1"/>
</dbReference>
<dbReference type="PANTHER" id="PTHR18976:SF11">
    <property type="entry name" value="APOLIPOPROTEIN A-I"/>
    <property type="match status" value="1"/>
</dbReference>
<dbReference type="Pfam" id="PF01442">
    <property type="entry name" value="Apolipoprotein"/>
    <property type="match status" value="1"/>
</dbReference>
<dbReference type="SUPFAM" id="SSF58113">
    <property type="entry name" value="Apolipoprotein A-I"/>
    <property type="match status" value="1"/>
</dbReference>